<proteinExistence type="inferred from homology"/>
<dbReference type="EC" id="2.8.1.13" evidence="1"/>
<dbReference type="EMBL" id="CP000976">
    <property type="protein sequence ID" value="ACH93614.1"/>
    <property type="molecule type" value="Genomic_DNA"/>
</dbReference>
<dbReference type="RefSeq" id="WP_012538423.1">
    <property type="nucleotide sequence ID" value="NC_011229.1"/>
</dbReference>
<dbReference type="SMR" id="B5RMM8"/>
<dbReference type="STRING" id="412419.BDU_685"/>
<dbReference type="KEGG" id="bdu:BDU_685"/>
<dbReference type="eggNOG" id="COG0482">
    <property type="taxonomic scope" value="Bacteria"/>
</dbReference>
<dbReference type="HOGENOM" id="CLU_035188_1_2_12"/>
<dbReference type="OrthoDB" id="9800696at2"/>
<dbReference type="Proteomes" id="UP000000611">
    <property type="component" value="Chromosome"/>
</dbReference>
<dbReference type="GO" id="GO:0005737">
    <property type="term" value="C:cytoplasm"/>
    <property type="evidence" value="ECO:0007669"/>
    <property type="project" value="UniProtKB-SubCell"/>
</dbReference>
<dbReference type="GO" id="GO:0005524">
    <property type="term" value="F:ATP binding"/>
    <property type="evidence" value="ECO:0007669"/>
    <property type="project" value="UniProtKB-KW"/>
</dbReference>
<dbReference type="GO" id="GO:0000049">
    <property type="term" value="F:tRNA binding"/>
    <property type="evidence" value="ECO:0007669"/>
    <property type="project" value="UniProtKB-KW"/>
</dbReference>
<dbReference type="GO" id="GO:0103016">
    <property type="term" value="F:tRNA-uridine 2-sulfurtransferase activity"/>
    <property type="evidence" value="ECO:0007669"/>
    <property type="project" value="UniProtKB-EC"/>
</dbReference>
<dbReference type="GO" id="GO:0006400">
    <property type="term" value="P:tRNA modification"/>
    <property type="evidence" value="ECO:0007669"/>
    <property type="project" value="UniProtKB-UniRule"/>
</dbReference>
<dbReference type="CDD" id="cd01998">
    <property type="entry name" value="MnmA_TRMU-like"/>
    <property type="match status" value="1"/>
</dbReference>
<dbReference type="FunFam" id="2.30.30.280:FF:000001">
    <property type="entry name" value="tRNA-specific 2-thiouridylase MnmA"/>
    <property type="match status" value="1"/>
</dbReference>
<dbReference type="Gene3D" id="2.30.30.280">
    <property type="entry name" value="Adenine nucleotide alpha hydrolases-like domains"/>
    <property type="match status" value="1"/>
</dbReference>
<dbReference type="Gene3D" id="3.40.50.620">
    <property type="entry name" value="HUPs"/>
    <property type="match status" value="1"/>
</dbReference>
<dbReference type="Gene3D" id="2.40.30.10">
    <property type="entry name" value="Translation factors"/>
    <property type="match status" value="1"/>
</dbReference>
<dbReference type="HAMAP" id="MF_00144">
    <property type="entry name" value="tRNA_thiouridyl_MnmA"/>
    <property type="match status" value="1"/>
</dbReference>
<dbReference type="InterPro" id="IPR004506">
    <property type="entry name" value="MnmA-like"/>
</dbReference>
<dbReference type="InterPro" id="IPR046885">
    <property type="entry name" value="MnmA-like_C"/>
</dbReference>
<dbReference type="InterPro" id="IPR046884">
    <property type="entry name" value="MnmA-like_central"/>
</dbReference>
<dbReference type="InterPro" id="IPR023382">
    <property type="entry name" value="MnmA-like_central_sf"/>
</dbReference>
<dbReference type="InterPro" id="IPR014729">
    <property type="entry name" value="Rossmann-like_a/b/a_fold"/>
</dbReference>
<dbReference type="InterPro" id="IPR051305">
    <property type="entry name" value="tRNA_2-thiouridylase_MnmA"/>
</dbReference>
<dbReference type="NCBIfam" id="NF001138">
    <property type="entry name" value="PRK00143.1"/>
    <property type="match status" value="1"/>
</dbReference>
<dbReference type="NCBIfam" id="TIGR00420">
    <property type="entry name" value="trmU"/>
    <property type="match status" value="1"/>
</dbReference>
<dbReference type="PANTHER" id="PTHR43052">
    <property type="match status" value="1"/>
</dbReference>
<dbReference type="PANTHER" id="PTHR43052:SF1">
    <property type="entry name" value="TRNA-5-TAURINOMETHYLURIDINE 2-SULFURTRANSFERASE"/>
    <property type="match status" value="1"/>
</dbReference>
<dbReference type="Pfam" id="PF03054">
    <property type="entry name" value="tRNA_Me_trans"/>
    <property type="match status" value="1"/>
</dbReference>
<dbReference type="Pfam" id="PF20258">
    <property type="entry name" value="tRNA_Me_trans_C"/>
    <property type="match status" value="1"/>
</dbReference>
<dbReference type="Pfam" id="PF20259">
    <property type="entry name" value="tRNA_Me_trans_M"/>
    <property type="match status" value="1"/>
</dbReference>
<dbReference type="SUPFAM" id="SSF52402">
    <property type="entry name" value="Adenine nucleotide alpha hydrolases-like"/>
    <property type="match status" value="1"/>
</dbReference>
<sequence length="354" mass="41231">MKIAILLSGGVDSSVALYTMIQKGYKNIKCYYLKIWLEDELSYIGECPWKEDITYVDSVCKKFNVPYEIINLQEEYYNRVVTYAIEELKMGNTPSPDIFCNQRIKFGAFFEKINEKYDLIVTGHYAKIENKNNSYTLKQAKDKIKDQSYFLSHLSKKQISKLHFPLGDLLKSEIRQIAHEIDLPNKNRKDSQGICFLGKIKYNEFIKYHLGELKGNIIEQETGKILGTHNGYWFFTIGQRKGIKLSHGPWFVTEKDIQNNIIYISNSTNYLKQGKEQFLVHKTNWINKPLKNDNLSAKIRHGEKKIKCKIETLKDEIIRVNLEEKDYGISPGQFCIFYKEDECLGGAKILKTLI</sequence>
<keyword id="KW-0067">ATP-binding</keyword>
<keyword id="KW-0963">Cytoplasm</keyword>
<keyword id="KW-1015">Disulfide bond</keyword>
<keyword id="KW-0547">Nucleotide-binding</keyword>
<keyword id="KW-0694">RNA-binding</keyword>
<keyword id="KW-0808">Transferase</keyword>
<keyword id="KW-0819">tRNA processing</keyword>
<keyword id="KW-0820">tRNA-binding</keyword>
<protein>
    <recommendedName>
        <fullName evidence="1">tRNA-specific 2-thiouridylase MnmA</fullName>
        <ecNumber evidence="1">2.8.1.13</ecNumber>
    </recommendedName>
</protein>
<name>MNMA_BORDL</name>
<accession>B5RMM8</accession>
<gene>
    <name evidence="1" type="primary">mnmA</name>
    <name type="ordered locus">BDU_685</name>
</gene>
<organism>
    <name type="scientific">Borrelia duttonii (strain Ly)</name>
    <dbReference type="NCBI Taxonomy" id="412419"/>
    <lineage>
        <taxon>Bacteria</taxon>
        <taxon>Pseudomonadati</taxon>
        <taxon>Spirochaetota</taxon>
        <taxon>Spirochaetia</taxon>
        <taxon>Spirochaetales</taxon>
        <taxon>Borreliaceae</taxon>
        <taxon>Borrelia</taxon>
    </lineage>
</organism>
<reference key="1">
    <citation type="journal article" date="2008" name="PLoS Genet.">
        <title>The genome of Borrelia recurrentis, the agent of deadly louse-borne relapsing fever, is a degraded subset of tick-borne Borrelia duttonii.</title>
        <authorList>
            <person name="Lescot M."/>
            <person name="Audic S."/>
            <person name="Robert C."/>
            <person name="Nguyen T.T."/>
            <person name="Blanc G."/>
            <person name="Cutler S.J."/>
            <person name="Wincker P."/>
            <person name="Couloux A."/>
            <person name="Claverie J.-M."/>
            <person name="Raoult D."/>
            <person name="Drancourt M."/>
        </authorList>
    </citation>
    <scope>NUCLEOTIDE SEQUENCE [LARGE SCALE GENOMIC DNA]</scope>
    <source>
        <strain>Ly</strain>
    </source>
</reference>
<evidence type="ECO:0000255" key="1">
    <source>
        <dbReference type="HAMAP-Rule" id="MF_00144"/>
    </source>
</evidence>
<comment type="function">
    <text evidence="1">Catalyzes the 2-thiolation of uridine at the wobble position (U34) of tRNA, leading to the formation of s(2)U34.</text>
</comment>
<comment type="catalytic activity">
    <reaction evidence="1">
        <text>S-sulfanyl-L-cysteinyl-[protein] + uridine(34) in tRNA + AH2 + ATP = 2-thiouridine(34) in tRNA + L-cysteinyl-[protein] + A + AMP + diphosphate + H(+)</text>
        <dbReference type="Rhea" id="RHEA:47032"/>
        <dbReference type="Rhea" id="RHEA-COMP:10131"/>
        <dbReference type="Rhea" id="RHEA-COMP:11726"/>
        <dbReference type="Rhea" id="RHEA-COMP:11727"/>
        <dbReference type="Rhea" id="RHEA-COMP:11728"/>
        <dbReference type="ChEBI" id="CHEBI:13193"/>
        <dbReference type="ChEBI" id="CHEBI:15378"/>
        <dbReference type="ChEBI" id="CHEBI:17499"/>
        <dbReference type="ChEBI" id="CHEBI:29950"/>
        <dbReference type="ChEBI" id="CHEBI:30616"/>
        <dbReference type="ChEBI" id="CHEBI:33019"/>
        <dbReference type="ChEBI" id="CHEBI:61963"/>
        <dbReference type="ChEBI" id="CHEBI:65315"/>
        <dbReference type="ChEBI" id="CHEBI:87170"/>
        <dbReference type="ChEBI" id="CHEBI:456215"/>
        <dbReference type="EC" id="2.8.1.13"/>
    </reaction>
</comment>
<comment type="subcellular location">
    <subcellularLocation>
        <location evidence="1">Cytoplasm</location>
    </subcellularLocation>
</comment>
<comment type="similarity">
    <text evidence="1">Belongs to the MnmA/TRMU family.</text>
</comment>
<feature type="chain" id="PRO_1000096284" description="tRNA-specific 2-thiouridylase MnmA">
    <location>
        <begin position="1"/>
        <end position="354"/>
    </location>
</feature>
<feature type="region of interest" description="Interaction with tRNA" evidence="1">
    <location>
        <begin position="145"/>
        <end position="147"/>
    </location>
</feature>
<feature type="active site" description="Nucleophile" evidence="1">
    <location>
        <position position="100"/>
    </location>
</feature>
<feature type="active site" description="Cysteine persulfide intermediate" evidence="1">
    <location>
        <position position="195"/>
    </location>
</feature>
<feature type="binding site" evidence="1">
    <location>
        <begin position="6"/>
        <end position="13"/>
    </location>
    <ligand>
        <name>ATP</name>
        <dbReference type="ChEBI" id="CHEBI:30616"/>
    </ligand>
</feature>
<feature type="binding site" evidence="1">
    <location>
        <position position="33"/>
    </location>
    <ligand>
        <name>ATP</name>
        <dbReference type="ChEBI" id="CHEBI:30616"/>
    </ligand>
</feature>
<feature type="binding site" evidence="1">
    <location>
        <position position="123"/>
    </location>
    <ligand>
        <name>ATP</name>
        <dbReference type="ChEBI" id="CHEBI:30616"/>
    </ligand>
</feature>
<feature type="site" description="Interaction with tRNA" evidence="1">
    <location>
        <position position="124"/>
    </location>
</feature>
<feature type="site" description="Interaction with tRNA" evidence="1">
    <location>
        <position position="333"/>
    </location>
</feature>
<feature type="disulfide bond" description="Alternate" evidence="1">
    <location>
        <begin position="100"/>
        <end position="195"/>
    </location>
</feature>